<protein>
    <recommendedName>
        <fullName>N(6)-adenosine-methyltransferase non-catalytic subunit METTL14</fullName>
    </recommendedName>
    <alternativeName>
        <fullName>Methyltransferase-like protein 14</fullName>
    </alternativeName>
</protein>
<feature type="chain" id="PRO_0000325789" description="N(6)-adenosine-methyltransferase non-catalytic subunit METTL14">
    <location>
        <begin position="1"/>
        <end position="456"/>
    </location>
</feature>
<feature type="region of interest" description="Disordered" evidence="4">
    <location>
        <begin position="45"/>
        <end position="76"/>
    </location>
</feature>
<feature type="region of interest" description="Interaction with METTL3" evidence="2">
    <location>
        <begin position="135"/>
        <end position="136"/>
    </location>
</feature>
<feature type="region of interest" description="Interaction with METTL3" evidence="2">
    <location>
        <begin position="237"/>
        <end position="238"/>
    </location>
</feature>
<feature type="region of interest" description="Positively charged region required for RNA-binding" evidence="2">
    <location>
        <begin position="245"/>
        <end position="254"/>
    </location>
</feature>
<feature type="region of interest" description="Interaction with METTL3" evidence="2">
    <location>
        <begin position="255"/>
        <end position="258"/>
    </location>
</feature>
<feature type="region of interest" description="Interaction with METTL3" evidence="2">
    <location>
        <begin position="278"/>
        <end position="287"/>
    </location>
</feature>
<feature type="region of interest" description="Positively charged region required for RNA-binding" evidence="2">
    <location>
        <begin position="297"/>
        <end position="298"/>
    </location>
</feature>
<feature type="region of interest" description="Interaction with METTL3" evidence="2">
    <location>
        <begin position="308"/>
        <end position="312"/>
    </location>
</feature>
<feature type="region of interest" description="Disordered" evidence="4">
    <location>
        <begin position="393"/>
        <end position="456"/>
    </location>
</feature>
<feature type="compositionally biased region" description="Gly residues" evidence="4">
    <location>
        <begin position="409"/>
        <end position="423"/>
    </location>
</feature>
<feature type="compositionally biased region" description="Basic and acidic residues" evidence="4">
    <location>
        <begin position="425"/>
        <end position="440"/>
    </location>
</feature>
<feature type="compositionally biased region" description="Gly residues" evidence="4">
    <location>
        <begin position="441"/>
        <end position="450"/>
    </location>
</feature>
<feature type="site" description="Interaction with METTL3" evidence="2">
    <location>
        <position position="146"/>
    </location>
</feature>
<feature type="site" description="Interaction with METTL3" evidence="2">
    <location>
        <position position="242"/>
    </location>
</feature>
<feature type="site" description="Interaction with METTL3" evidence="2">
    <location>
        <position position="245"/>
    </location>
</feature>
<feature type="site" description="Interaction with METTL3" evidence="2">
    <location>
        <position position="298"/>
    </location>
</feature>
<feature type="site" description="Interaction with METTL3" evidence="2">
    <location>
        <position position="399"/>
    </location>
</feature>
<feature type="modified residue" description="Phosphoserine" evidence="2">
    <location>
        <position position="399"/>
    </location>
</feature>
<feature type="helix" evidence="5">
    <location>
        <begin position="119"/>
        <end position="126"/>
    </location>
</feature>
<feature type="helix" evidence="5">
    <location>
        <begin position="130"/>
        <end position="133"/>
    </location>
</feature>
<feature type="helix" evidence="5">
    <location>
        <begin position="154"/>
        <end position="163"/>
    </location>
</feature>
<feature type="strand" evidence="5">
    <location>
        <begin position="168"/>
        <end position="171"/>
    </location>
</feature>
<feature type="turn" evidence="5">
    <location>
        <begin position="174"/>
        <end position="176"/>
    </location>
</feature>
<feature type="helix" evidence="5">
    <location>
        <begin position="179"/>
        <end position="181"/>
    </location>
</feature>
<feature type="strand" evidence="5">
    <location>
        <begin position="186"/>
        <end position="191"/>
    </location>
</feature>
<feature type="helix" evidence="5">
    <location>
        <begin position="196"/>
        <end position="198"/>
    </location>
</feature>
<feature type="helix" evidence="5">
    <location>
        <begin position="213"/>
        <end position="217"/>
    </location>
</feature>
<feature type="helix" evidence="5">
    <location>
        <begin position="221"/>
        <end position="223"/>
    </location>
</feature>
<feature type="strand" evidence="5">
    <location>
        <begin position="225"/>
        <end position="238"/>
    </location>
</feature>
<feature type="helix" evidence="5">
    <location>
        <begin position="240"/>
        <end position="250"/>
    </location>
</feature>
<feature type="strand" evidence="5">
    <location>
        <begin position="254"/>
        <end position="264"/>
    </location>
</feature>
<feature type="strand" evidence="5">
    <location>
        <begin position="280"/>
        <end position="282"/>
    </location>
</feature>
<feature type="strand" evidence="5">
    <location>
        <begin position="285"/>
        <end position="293"/>
    </location>
</feature>
<feature type="strand" evidence="5">
    <location>
        <begin position="311"/>
        <end position="317"/>
    </location>
</feature>
<feature type="helix" evidence="5">
    <location>
        <begin position="329"/>
        <end position="336"/>
    </location>
</feature>
<feature type="strand" evidence="5">
    <location>
        <begin position="343"/>
        <end position="346"/>
    </location>
</feature>
<feature type="helix" evidence="5">
    <location>
        <begin position="350"/>
        <end position="352"/>
    </location>
</feature>
<feature type="strand" evidence="5">
    <location>
        <begin position="358"/>
        <end position="361"/>
    </location>
</feature>
<feature type="helix" evidence="5">
    <location>
        <begin position="371"/>
        <end position="376"/>
    </location>
</feature>
<feature type="strand" evidence="5">
    <location>
        <begin position="387"/>
        <end position="389"/>
    </location>
</feature>
<dbReference type="EMBL" id="BC134533">
    <property type="protein sequence ID" value="AAI34534.1"/>
    <property type="molecule type" value="mRNA"/>
</dbReference>
<dbReference type="RefSeq" id="NP_001077183.1">
    <property type="nucleotide sequence ID" value="NM_001083714.1"/>
</dbReference>
<dbReference type="PDB" id="8PW8">
    <property type="method" value="X-ray"/>
    <property type="resolution" value="2.30 A"/>
    <property type="chains" value="B=107-395"/>
</dbReference>
<dbReference type="PDB" id="8PW9">
    <property type="method" value="X-ray"/>
    <property type="resolution" value="2.30 A"/>
    <property type="chains" value="B=107-395"/>
</dbReference>
<dbReference type="PDB" id="8PWA">
    <property type="method" value="X-ray"/>
    <property type="resolution" value="2.10 A"/>
    <property type="chains" value="B=107-395"/>
</dbReference>
<dbReference type="PDB" id="8PWB">
    <property type="method" value="X-ray"/>
    <property type="resolution" value="2.50 A"/>
    <property type="chains" value="B=107-395"/>
</dbReference>
<dbReference type="PDBsum" id="8PW8"/>
<dbReference type="PDBsum" id="8PW9"/>
<dbReference type="PDBsum" id="8PWA"/>
<dbReference type="PDBsum" id="8PWB"/>
<dbReference type="SMR" id="A4IFD8"/>
<dbReference type="FunCoup" id="A4IFD8">
    <property type="interactions" value="4593"/>
</dbReference>
<dbReference type="STRING" id="9913.ENSBTAP00000018721"/>
<dbReference type="PaxDb" id="9913-ENSBTAP00000018721"/>
<dbReference type="GeneID" id="531382"/>
<dbReference type="KEGG" id="bta:531382"/>
<dbReference type="CTD" id="57721"/>
<dbReference type="eggNOG" id="KOG2097">
    <property type="taxonomic scope" value="Eukaryota"/>
</dbReference>
<dbReference type="InParanoid" id="A4IFD8"/>
<dbReference type="OrthoDB" id="14833at2759"/>
<dbReference type="Proteomes" id="UP000009136">
    <property type="component" value="Unplaced"/>
</dbReference>
<dbReference type="GO" id="GO:0005634">
    <property type="term" value="C:nucleus"/>
    <property type="evidence" value="ECO:0000250"/>
    <property type="project" value="UniProtKB"/>
</dbReference>
<dbReference type="GO" id="GO:0036396">
    <property type="term" value="C:RNA N6-methyladenosine methyltransferase complex"/>
    <property type="evidence" value="ECO:0000250"/>
    <property type="project" value="UniProtKB"/>
</dbReference>
<dbReference type="GO" id="GO:0003729">
    <property type="term" value="F:mRNA binding"/>
    <property type="evidence" value="ECO:0000250"/>
    <property type="project" value="UniProtKB"/>
</dbReference>
<dbReference type="GO" id="GO:0001734">
    <property type="term" value="F:mRNA m(6)A methyltransferase activity"/>
    <property type="evidence" value="ECO:0000250"/>
    <property type="project" value="UniProtKB"/>
</dbReference>
<dbReference type="GO" id="GO:0021861">
    <property type="term" value="P:forebrain radial glial cell differentiation"/>
    <property type="evidence" value="ECO:0000250"/>
    <property type="project" value="UniProtKB"/>
</dbReference>
<dbReference type="GO" id="GO:0042063">
    <property type="term" value="P:gliogenesis"/>
    <property type="evidence" value="ECO:0000250"/>
    <property type="project" value="UniProtKB"/>
</dbReference>
<dbReference type="GO" id="GO:0061157">
    <property type="term" value="P:mRNA destabilization"/>
    <property type="evidence" value="ECO:0000250"/>
    <property type="project" value="UniProtKB"/>
</dbReference>
<dbReference type="GO" id="GO:0016556">
    <property type="term" value="P:mRNA modification"/>
    <property type="evidence" value="ECO:0000318"/>
    <property type="project" value="GO_Central"/>
</dbReference>
<dbReference type="GO" id="GO:0006397">
    <property type="term" value="P:mRNA processing"/>
    <property type="evidence" value="ECO:0000250"/>
    <property type="project" value="UniProtKB"/>
</dbReference>
<dbReference type="GO" id="GO:0000398">
    <property type="term" value="P:mRNA splicing, via spliceosome"/>
    <property type="evidence" value="ECO:0000250"/>
    <property type="project" value="UniProtKB"/>
</dbReference>
<dbReference type="GO" id="GO:0001510">
    <property type="term" value="P:RNA methylation"/>
    <property type="evidence" value="ECO:0000250"/>
    <property type="project" value="UniProtKB"/>
</dbReference>
<dbReference type="GO" id="GO:0007283">
    <property type="term" value="P:spermatogenesis"/>
    <property type="evidence" value="ECO:0000250"/>
    <property type="project" value="UniProtKB"/>
</dbReference>
<dbReference type="GO" id="GO:0019827">
    <property type="term" value="P:stem cell population maintenance"/>
    <property type="evidence" value="ECO:0000250"/>
    <property type="project" value="UniProtKB"/>
</dbReference>
<dbReference type="InterPro" id="IPR045123">
    <property type="entry name" value="METTL14-like"/>
</dbReference>
<dbReference type="InterPro" id="IPR007757">
    <property type="entry name" value="MT-A70-like"/>
</dbReference>
<dbReference type="InterPro" id="IPR029063">
    <property type="entry name" value="SAM-dependent_MTases_sf"/>
</dbReference>
<dbReference type="PANTHER" id="PTHR13107">
    <property type="entry name" value="N6-ADENOSINE-METHYLTRANSFERASE NON-CATALYTIC SUBUNIT"/>
    <property type="match status" value="1"/>
</dbReference>
<dbReference type="PANTHER" id="PTHR13107:SF0">
    <property type="entry name" value="N6-ADENOSINE-METHYLTRANSFERASE NON-CATALYTIC SUBUNIT"/>
    <property type="match status" value="1"/>
</dbReference>
<dbReference type="Pfam" id="PF05063">
    <property type="entry name" value="MT-A70"/>
    <property type="match status" value="1"/>
</dbReference>
<dbReference type="SUPFAM" id="SSF53335">
    <property type="entry name" value="S-adenosyl-L-methionine-dependent methyltransferases"/>
    <property type="match status" value="1"/>
</dbReference>
<dbReference type="PROSITE" id="PS51143">
    <property type="entry name" value="MT_A70"/>
    <property type="match status" value="1"/>
</dbReference>
<dbReference type="PROSITE" id="PS51592">
    <property type="entry name" value="SAM_MTA70L_2"/>
    <property type="match status" value="1"/>
</dbReference>
<organism>
    <name type="scientific">Bos taurus</name>
    <name type="common">Bovine</name>
    <dbReference type="NCBI Taxonomy" id="9913"/>
    <lineage>
        <taxon>Eukaryota</taxon>
        <taxon>Metazoa</taxon>
        <taxon>Chordata</taxon>
        <taxon>Craniata</taxon>
        <taxon>Vertebrata</taxon>
        <taxon>Euteleostomi</taxon>
        <taxon>Mammalia</taxon>
        <taxon>Eutheria</taxon>
        <taxon>Laurasiatheria</taxon>
        <taxon>Artiodactyla</taxon>
        <taxon>Ruminantia</taxon>
        <taxon>Pecora</taxon>
        <taxon>Bovidae</taxon>
        <taxon>Bovinae</taxon>
        <taxon>Bos</taxon>
    </lineage>
</organism>
<name>MET14_BOVIN</name>
<evidence type="ECO:0000250" key="1">
    <source>
        <dbReference type="UniProtKB" id="Q3UIK4"/>
    </source>
</evidence>
<evidence type="ECO:0000250" key="2">
    <source>
        <dbReference type="UniProtKB" id="Q9HCE5"/>
    </source>
</evidence>
<evidence type="ECO:0000255" key="3">
    <source>
        <dbReference type="PROSITE-ProRule" id="PRU00489"/>
    </source>
</evidence>
<evidence type="ECO:0000256" key="4">
    <source>
        <dbReference type="SAM" id="MobiDB-lite"/>
    </source>
</evidence>
<evidence type="ECO:0007829" key="5">
    <source>
        <dbReference type="PDB" id="8PWA"/>
    </source>
</evidence>
<reference key="1">
    <citation type="submission" date="2007-03" db="EMBL/GenBank/DDBJ databases">
        <authorList>
            <consortium name="NIH - Mammalian Gene Collection (MGC) project"/>
        </authorList>
    </citation>
    <scope>NUCLEOTIDE SEQUENCE [LARGE SCALE MRNA]</scope>
    <source>
        <strain>Hereford</strain>
        <tissue>Ascending colon</tissue>
    </source>
</reference>
<comment type="function">
    <text evidence="1 2">The METTL3-METTL14 heterodimer forms a N6-methyltransferase complex that methylates adenosine residues at the N(6) position of some mRNAs and regulates the circadian clock, differentiation of embryonic stem cells and cortical neurogenesis. In the heterodimer formed with METTL3, METTL14 constitutes the RNA-binding scaffold that recognizes the substrate rather than the catalytic core. N6-methyladenosine (m6A), which takes place at the 5'-[AG]GAC-3' consensus sites of some mRNAs, plays a role in mRNA stability and processing (By similarity). M6A acts as a key regulator of mRNA stability by promoting mRNA destabilization and degradation (By similarity). In embryonic stem cells (ESCs), m6A methylation of mRNAs encoding key naive pluripotency-promoting transcripts results in transcript destabilization (By similarity). M6A regulates spermatogonial differentiation and meiosis and is essential for male fertility and spermatogenesis (By similarity). M6A also regulates cortical neurogenesis: m6A methylation of transcripts related to transcription factors, neural stem cells, the cell cycle and neuronal differentiation during brain development promotes their destabilization and decay, promoting differentiation of radial glial cells (By similarity).</text>
</comment>
<comment type="subunit">
    <text evidence="2">Heterodimer; heterodimerizes with METTL3 to form an antiparallel heterodimer that constitutes an active methyltransferase. Component of the WMM complex, a N6-methyltransferase complex composed of a catalytic subcomplex, named MAC, and of an associated subcomplex, named MACOM. The MAC subcomplex is composed of METTL3 and METTL14. The MACOM subcomplex is composed of WTAP, ZC3H13, CBLL1/HAKAI, VIRMA, and, in some cases of RBM15 (RBM15 or RBM15B).</text>
</comment>
<comment type="subcellular location">
    <subcellularLocation>
        <location evidence="2">Nucleus</location>
    </subcellularLocation>
</comment>
<comment type="similarity">
    <text evidence="3">Belongs to the MT-A70-like family.</text>
</comment>
<proteinExistence type="evidence at protein level"/>
<sequence length="456" mass="52193">MDSRLQEIRERQKLRRQLLAQQLGAESADSIGALLNSKDEQREIAETRETCRASYDTSAPNAKRKYQDEGETDEDKMEEYKDELEMQQEEENLPYEEEIYKDSSTFLKGTQSLNPHNDYCQHFVDTGHRPQNFIRDVGLADRFEEYPKLRELIRLKDELIAKSNTPPMYLQADIEAFDIRELTPKFDVILLEPPLEEYYRETGITANEKCWTWDDIMKLEIDEIAAPRSFIFLWCGSGEGLDLGRVCLRKWGYRRCEDICWIKTNKNNPGKTKTLDPKAVFQRTKEHCLMGIKGTVKRSTDGDFIHANVDIDLIITEEPEIGNIEKPVEIFHIIEHFCLGRRRLHLFGRDSTIRPGWLTVGPTLTNSNYNAETYASYFSAPNSYLTGCTEEIERLRPKSPPPKSKSDRGGGAPRGGGRGGTSAGRGRERNRSNFRGERGGFRGGRGGAHRGGFPPR</sequence>
<gene>
    <name type="primary">METTL14</name>
</gene>
<accession>A4IFD8</accession>
<keyword id="KW-0002">3D-structure</keyword>
<keyword id="KW-0221">Differentiation</keyword>
<keyword id="KW-0539">Nucleus</keyword>
<keyword id="KW-0597">Phosphoprotein</keyword>
<keyword id="KW-1185">Reference proteome</keyword>
<keyword id="KW-0694">RNA-binding</keyword>
<keyword id="KW-0744">Spermatogenesis</keyword>